<keyword id="KW-0007">Acetylation</keyword>
<keyword id="KW-1185">Reference proteome</keyword>
<keyword id="KW-0687">Ribonucleoprotein</keyword>
<keyword id="KW-0689">Ribosomal protein</keyword>
<reference key="1">
    <citation type="journal article" date="2000" name="Nature">
        <title>Sequence and analysis of chromosome 1 of the plant Arabidopsis thaliana.</title>
        <authorList>
            <person name="Theologis A."/>
            <person name="Ecker J.R."/>
            <person name="Palm C.J."/>
            <person name="Federspiel N.A."/>
            <person name="Kaul S."/>
            <person name="White O."/>
            <person name="Alonso J."/>
            <person name="Altafi H."/>
            <person name="Araujo R."/>
            <person name="Bowman C.L."/>
            <person name="Brooks S.Y."/>
            <person name="Buehler E."/>
            <person name="Chan A."/>
            <person name="Chao Q."/>
            <person name="Chen H."/>
            <person name="Cheuk R.F."/>
            <person name="Chin C.W."/>
            <person name="Chung M.K."/>
            <person name="Conn L."/>
            <person name="Conway A.B."/>
            <person name="Conway A.R."/>
            <person name="Creasy T.H."/>
            <person name="Dewar K."/>
            <person name="Dunn P."/>
            <person name="Etgu P."/>
            <person name="Feldblyum T.V."/>
            <person name="Feng J.-D."/>
            <person name="Fong B."/>
            <person name="Fujii C.Y."/>
            <person name="Gill J.E."/>
            <person name="Goldsmith A.D."/>
            <person name="Haas B."/>
            <person name="Hansen N.F."/>
            <person name="Hughes B."/>
            <person name="Huizar L."/>
            <person name="Hunter J.L."/>
            <person name="Jenkins J."/>
            <person name="Johnson-Hopson C."/>
            <person name="Khan S."/>
            <person name="Khaykin E."/>
            <person name="Kim C.J."/>
            <person name="Koo H.L."/>
            <person name="Kremenetskaia I."/>
            <person name="Kurtz D.B."/>
            <person name="Kwan A."/>
            <person name="Lam B."/>
            <person name="Langin-Hooper S."/>
            <person name="Lee A."/>
            <person name="Lee J.M."/>
            <person name="Lenz C.A."/>
            <person name="Li J.H."/>
            <person name="Li Y.-P."/>
            <person name="Lin X."/>
            <person name="Liu S.X."/>
            <person name="Liu Z.A."/>
            <person name="Luros J.S."/>
            <person name="Maiti R."/>
            <person name="Marziali A."/>
            <person name="Militscher J."/>
            <person name="Miranda M."/>
            <person name="Nguyen M."/>
            <person name="Nierman W.C."/>
            <person name="Osborne B.I."/>
            <person name="Pai G."/>
            <person name="Peterson J."/>
            <person name="Pham P.K."/>
            <person name="Rizzo M."/>
            <person name="Rooney T."/>
            <person name="Rowley D."/>
            <person name="Sakano H."/>
            <person name="Salzberg S.L."/>
            <person name="Schwartz J.R."/>
            <person name="Shinn P."/>
            <person name="Southwick A.M."/>
            <person name="Sun H."/>
            <person name="Tallon L.J."/>
            <person name="Tambunga G."/>
            <person name="Toriumi M.J."/>
            <person name="Town C.D."/>
            <person name="Utterback T."/>
            <person name="Van Aken S."/>
            <person name="Vaysberg M."/>
            <person name="Vysotskaia V.S."/>
            <person name="Walker M."/>
            <person name="Wu D."/>
            <person name="Yu G."/>
            <person name="Fraser C.M."/>
            <person name="Venter J.C."/>
            <person name="Davis R.W."/>
        </authorList>
    </citation>
    <scope>NUCLEOTIDE SEQUENCE [LARGE SCALE GENOMIC DNA]</scope>
    <source>
        <strain>cv. Columbia</strain>
    </source>
</reference>
<reference key="2">
    <citation type="journal article" date="2017" name="Plant J.">
        <title>Araport11: a complete reannotation of the Arabidopsis thaliana reference genome.</title>
        <authorList>
            <person name="Cheng C.Y."/>
            <person name="Krishnakumar V."/>
            <person name="Chan A.P."/>
            <person name="Thibaud-Nissen F."/>
            <person name="Schobel S."/>
            <person name="Town C.D."/>
        </authorList>
    </citation>
    <scope>GENOME REANNOTATION</scope>
    <source>
        <strain>cv. Columbia</strain>
    </source>
</reference>
<reference key="3">
    <citation type="journal article" date="2003" name="Science">
        <title>Empirical analysis of transcriptional activity in the Arabidopsis genome.</title>
        <authorList>
            <person name="Yamada K."/>
            <person name="Lim J."/>
            <person name="Dale J.M."/>
            <person name="Chen H."/>
            <person name="Shinn P."/>
            <person name="Palm C.J."/>
            <person name="Southwick A.M."/>
            <person name="Wu H.C."/>
            <person name="Kim C.J."/>
            <person name="Nguyen M."/>
            <person name="Pham P.K."/>
            <person name="Cheuk R.F."/>
            <person name="Karlin-Newmann G."/>
            <person name="Liu S.X."/>
            <person name="Lam B."/>
            <person name="Sakano H."/>
            <person name="Wu T."/>
            <person name="Yu G."/>
            <person name="Miranda M."/>
            <person name="Quach H.L."/>
            <person name="Tripp M."/>
            <person name="Chang C.H."/>
            <person name="Lee J.M."/>
            <person name="Toriumi M.J."/>
            <person name="Chan M.M."/>
            <person name="Tang C.C."/>
            <person name="Onodera C.S."/>
            <person name="Deng J.M."/>
            <person name="Akiyama K."/>
            <person name="Ansari Y."/>
            <person name="Arakawa T."/>
            <person name="Banh J."/>
            <person name="Banno F."/>
            <person name="Bowser L."/>
            <person name="Brooks S.Y."/>
            <person name="Carninci P."/>
            <person name="Chao Q."/>
            <person name="Choy N."/>
            <person name="Enju A."/>
            <person name="Goldsmith A.D."/>
            <person name="Gurjal M."/>
            <person name="Hansen N.F."/>
            <person name="Hayashizaki Y."/>
            <person name="Johnson-Hopson C."/>
            <person name="Hsuan V.W."/>
            <person name="Iida K."/>
            <person name="Karnes M."/>
            <person name="Khan S."/>
            <person name="Koesema E."/>
            <person name="Ishida J."/>
            <person name="Jiang P.X."/>
            <person name="Jones T."/>
            <person name="Kawai J."/>
            <person name="Kamiya A."/>
            <person name="Meyers C."/>
            <person name="Nakajima M."/>
            <person name="Narusaka M."/>
            <person name="Seki M."/>
            <person name="Sakurai T."/>
            <person name="Satou M."/>
            <person name="Tamse R."/>
            <person name="Vaysberg M."/>
            <person name="Wallender E.K."/>
            <person name="Wong C."/>
            <person name="Yamamura Y."/>
            <person name="Yuan S."/>
            <person name="Shinozaki K."/>
            <person name="Davis R.W."/>
            <person name="Theologis A."/>
            <person name="Ecker J.R."/>
        </authorList>
    </citation>
    <scope>NUCLEOTIDE SEQUENCE [LARGE SCALE MRNA]</scope>
    <source>
        <strain>cv. Columbia</strain>
    </source>
</reference>
<reference key="4">
    <citation type="submission" date="2002-03" db="EMBL/GenBank/DDBJ databases">
        <title>Full-length cDNA from Arabidopsis thaliana.</title>
        <authorList>
            <person name="Brover V.V."/>
            <person name="Troukhan M.E."/>
            <person name="Alexandrov N.A."/>
            <person name="Lu Y.-P."/>
            <person name="Flavell R.B."/>
            <person name="Feldmann K.A."/>
        </authorList>
    </citation>
    <scope>NUCLEOTIDE SEQUENCE [LARGE SCALE MRNA]</scope>
</reference>
<reference key="5">
    <citation type="journal article" date="2001" name="Plant Physiol.">
        <title>The organization of cytoplasmic ribosomal protein genes in the Arabidopsis genome.</title>
        <authorList>
            <person name="Barakat A."/>
            <person name="Szick-Miranda K."/>
            <person name="Chang I.-F."/>
            <person name="Guyot R."/>
            <person name="Blanc G."/>
            <person name="Cooke R."/>
            <person name="Delseny M."/>
            <person name="Bailey-Serres J."/>
        </authorList>
    </citation>
    <scope>GENE FAMILY ORGANIZATION</scope>
    <scope>NOMENCLATURE</scope>
</reference>
<reference key="6">
    <citation type="journal article" date="2023" name="Plant Cell">
        <title>An updated nomenclature for plant ribosomal protein genes.</title>
        <authorList>
            <person name="Scarpin M.R."/>
            <person name="Busche M."/>
            <person name="Martinez R.E."/>
            <person name="Harper L.C."/>
            <person name="Reiser L."/>
            <person name="Szakonyi D."/>
            <person name="Merchante C."/>
            <person name="Lan T."/>
            <person name="Xiong W."/>
            <person name="Mo B."/>
            <person name="Tang G."/>
            <person name="Chen X."/>
            <person name="Bailey-Serres J."/>
            <person name="Browning K.S."/>
            <person name="Brunkard J.O."/>
        </authorList>
    </citation>
    <scope>NOMENCLATURE</scope>
</reference>
<sequence length="144" mass="15377">MSGDEAAPVVVPPPVAEPAAIPEDMDLMTALELTLRKARAYGGVVRGLHECAKLIEKRVAQLVVLAEDCNQPDYVKLVKALCADHEVRLLTVPSAKTLGEWAGLCKIDSEGNARKVVGCSCLVVKDFGEETTALSIVNKHIASQ</sequence>
<dbReference type="EMBL" id="AC010924">
    <property type="protein sequence ID" value="AAF18490.1"/>
    <property type="molecule type" value="Genomic_DNA"/>
</dbReference>
<dbReference type="EMBL" id="CP002684">
    <property type="protein sequence ID" value="AEE29385.1"/>
    <property type="molecule type" value="Genomic_DNA"/>
</dbReference>
<dbReference type="EMBL" id="CP002684">
    <property type="protein sequence ID" value="AEE29386.1"/>
    <property type="molecule type" value="Genomic_DNA"/>
</dbReference>
<dbReference type="EMBL" id="AF380626">
    <property type="protein sequence ID" value="AAK55707.1"/>
    <property type="molecule type" value="mRNA"/>
</dbReference>
<dbReference type="EMBL" id="AY054130">
    <property type="protein sequence ID" value="AAL06791.1"/>
    <property type="molecule type" value="mRNA"/>
</dbReference>
<dbReference type="EMBL" id="AY084613">
    <property type="protein sequence ID" value="AAM61176.1"/>
    <property type="molecule type" value="mRNA"/>
</dbReference>
<dbReference type="PIR" id="G86293">
    <property type="entry name" value="G86293"/>
</dbReference>
<dbReference type="RefSeq" id="NP_173045.1">
    <property type="nucleotide sequence ID" value="NM_101461.5"/>
</dbReference>
<dbReference type="RefSeq" id="NP_849673.1">
    <property type="nucleotide sequence ID" value="NM_179342.3"/>
</dbReference>
<dbReference type="SMR" id="Q9S9P1"/>
<dbReference type="BioGRID" id="23403">
    <property type="interactions" value="2"/>
</dbReference>
<dbReference type="FunCoup" id="Q9S9P1">
    <property type="interactions" value="3268"/>
</dbReference>
<dbReference type="STRING" id="3702.Q9S9P1"/>
<dbReference type="iPTMnet" id="Q9S9P1"/>
<dbReference type="PaxDb" id="3702-AT1G15930.1"/>
<dbReference type="ProteomicsDB" id="228256"/>
<dbReference type="EnsemblPlants" id="AT1G15930.1">
    <property type="protein sequence ID" value="AT1G15930.1"/>
    <property type="gene ID" value="AT1G15930"/>
</dbReference>
<dbReference type="EnsemblPlants" id="AT1G15930.2">
    <property type="protein sequence ID" value="AT1G15930.2"/>
    <property type="gene ID" value="AT1G15930"/>
</dbReference>
<dbReference type="GeneID" id="838163"/>
<dbReference type="Gramene" id="AT1G15930.1">
    <property type="protein sequence ID" value="AT1G15930.1"/>
    <property type="gene ID" value="AT1G15930"/>
</dbReference>
<dbReference type="Gramene" id="AT1G15930.2">
    <property type="protein sequence ID" value="AT1G15930.2"/>
    <property type="gene ID" value="AT1G15930"/>
</dbReference>
<dbReference type="KEGG" id="ath:AT1G15930"/>
<dbReference type="Araport" id="AT1G15930"/>
<dbReference type="TAIR" id="AT1G15930"/>
<dbReference type="eggNOG" id="KOG3406">
    <property type="taxonomic scope" value="Eukaryota"/>
</dbReference>
<dbReference type="HOGENOM" id="CLU_110343_1_1_1"/>
<dbReference type="InParanoid" id="Q9S9P1"/>
<dbReference type="OMA" id="CIETEFD"/>
<dbReference type="OrthoDB" id="10249311at2759"/>
<dbReference type="PhylomeDB" id="Q9S9P1"/>
<dbReference type="CD-CODE" id="4299E36E">
    <property type="entry name" value="Nucleolus"/>
</dbReference>
<dbReference type="PRO" id="PR:Q9S9P1"/>
<dbReference type="Proteomes" id="UP000006548">
    <property type="component" value="Chromosome 1"/>
</dbReference>
<dbReference type="ExpressionAtlas" id="Q9S9P1">
    <property type="expression patterns" value="baseline and differential"/>
</dbReference>
<dbReference type="GO" id="GO:0022626">
    <property type="term" value="C:cytosolic ribosome"/>
    <property type="evidence" value="ECO:0007005"/>
    <property type="project" value="TAIR"/>
</dbReference>
<dbReference type="GO" id="GO:0022627">
    <property type="term" value="C:cytosolic small ribosomal subunit"/>
    <property type="evidence" value="ECO:0007005"/>
    <property type="project" value="TAIR"/>
</dbReference>
<dbReference type="GO" id="GO:0005634">
    <property type="term" value="C:nucleus"/>
    <property type="evidence" value="ECO:0007005"/>
    <property type="project" value="TAIR"/>
</dbReference>
<dbReference type="GO" id="GO:0003735">
    <property type="term" value="F:structural constituent of ribosome"/>
    <property type="evidence" value="ECO:0000314"/>
    <property type="project" value="CAFA"/>
</dbReference>
<dbReference type="GO" id="GO:0006412">
    <property type="term" value="P:translation"/>
    <property type="evidence" value="ECO:0007669"/>
    <property type="project" value="InterPro"/>
</dbReference>
<dbReference type="FunFam" id="3.30.1330.30:FF:000013">
    <property type="entry name" value="40S ribosomal protein S12"/>
    <property type="match status" value="1"/>
</dbReference>
<dbReference type="Gene3D" id="3.30.1330.30">
    <property type="match status" value="1"/>
</dbReference>
<dbReference type="InterPro" id="IPR029064">
    <property type="entry name" value="Ribosomal_eL30-like_sf"/>
</dbReference>
<dbReference type="InterPro" id="IPR004038">
    <property type="entry name" value="Ribosomal_eL8/eL30/eS12/Gad45"/>
</dbReference>
<dbReference type="InterPro" id="IPR000530">
    <property type="entry name" value="Ribosomal_eS12"/>
</dbReference>
<dbReference type="InterPro" id="IPR047860">
    <property type="entry name" value="Ribosomal_eS12_CS"/>
</dbReference>
<dbReference type="PANTHER" id="PTHR11843">
    <property type="entry name" value="40S RIBOSOMAL PROTEIN S12"/>
    <property type="match status" value="1"/>
</dbReference>
<dbReference type="Pfam" id="PF01248">
    <property type="entry name" value="Ribosomal_L7Ae"/>
    <property type="match status" value="1"/>
</dbReference>
<dbReference type="PRINTS" id="PR00972">
    <property type="entry name" value="RIBSOMALS12E"/>
</dbReference>
<dbReference type="SUPFAM" id="SSF55315">
    <property type="entry name" value="L30e-like"/>
    <property type="match status" value="1"/>
</dbReference>
<dbReference type="PROSITE" id="PS01189">
    <property type="entry name" value="RIBOSOMAL_S12E"/>
    <property type="match status" value="1"/>
</dbReference>
<proteinExistence type="evidence at transcript level"/>
<comment type="similarity">
    <text evidence="3">Belongs to the eukaryotic ribosomal protein eS12 family.</text>
</comment>
<name>RS121_ARATH</name>
<accession>Q9S9P1</accession>
<feature type="initiator methionine" description="Removed" evidence="1">
    <location>
        <position position="1"/>
    </location>
</feature>
<feature type="chain" id="PRO_0000122334" description="Small ribosomal subunit protein eS12z">
    <location>
        <begin position="2"/>
        <end position="144"/>
    </location>
</feature>
<feature type="modified residue" description="N-acetylserine" evidence="1">
    <location>
        <position position="2"/>
    </location>
</feature>
<organism>
    <name type="scientific">Arabidopsis thaliana</name>
    <name type="common">Mouse-ear cress</name>
    <dbReference type="NCBI Taxonomy" id="3702"/>
    <lineage>
        <taxon>Eukaryota</taxon>
        <taxon>Viridiplantae</taxon>
        <taxon>Streptophyta</taxon>
        <taxon>Embryophyta</taxon>
        <taxon>Tracheophyta</taxon>
        <taxon>Spermatophyta</taxon>
        <taxon>Magnoliopsida</taxon>
        <taxon>eudicotyledons</taxon>
        <taxon>Gunneridae</taxon>
        <taxon>Pentapetalae</taxon>
        <taxon>rosids</taxon>
        <taxon>malvids</taxon>
        <taxon>Brassicales</taxon>
        <taxon>Brassicaceae</taxon>
        <taxon>Camelineae</taxon>
        <taxon>Arabidopsis</taxon>
    </lineage>
</organism>
<protein>
    <recommendedName>
        <fullName evidence="2">Small ribosomal subunit protein eS12z</fullName>
    </recommendedName>
    <alternativeName>
        <fullName>40S ribosomal protein S12-1</fullName>
    </alternativeName>
</protein>
<evidence type="ECO:0000250" key="1">
    <source>
        <dbReference type="UniProtKB" id="Q9SKZ3"/>
    </source>
</evidence>
<evidence type="ECO:0000303" key="2">
    <source>
    </source>
</evidence>
<evidence type="ECO:0000305" key="3"/>
<gene>
    <name type="primary">RPS12A</name>
    <name type="ordered locus">At1g15930</name>
    <name type="ORF">T24D18.3</name>
</gene>